<gene>
    <name evidence="1" type="primary">ubiA</name>
    <name type="ordered locus">PputGB1_5365</name>
</gene>
<name>UBIA_PSEPG</name>
<sequence length="296" mass="32997">MYLQLLKSLNRLHPRAWDFVQLSRMDRPIGIYLLLWPTLSAVWIAGNGSPTLANVLIFGLGVVLMRAAGCCINDFADRKVDGHVKRTADRPLASGRVRPREALALFAMLVGVSFLLVLCTNSRTVWLSFGAVALAFCYPFMKRYTYYPQVVLGAAYSWGIPMAFTAAGGELPASAWLLYIANLLWTVGYDTYYAMVDRDDDLKIGVKSTAILFGDADRNIILTLQLLSLGCLLLAGSRFDLGGWFHLGLLGAAACFAWEYWSTRKLDRESCFKAFLHNHWAGLLVFIGVVLDYAFR</sequence>
<organism>
    <name type="scientific">Pseudomonas putida (strain GB-1)</name>
    <dbReference type="NCBI Taxonomy" id="76869"/>
    <lineage>
        <taxon>Bacteria</taxon>
        <taxon>Pseudomonadati</taxon>
        <taxon>Pseudomonadota</taxon>
        <taxon>Gammaproteobacteria</taxon>
        <taxon>Pseudomonadales</taxon>
        <taxon>Pseudomonadaceae</taxon>
        <taxon>Pseudomonas</taxon>
    </lineage>
</organism>
<evidence type="ECO:0000255" key="1">
    <source>
        <dbReference type="HAMAP-Rule" id="MF_01635"/>
    </source>
</evidence>
<dbReference type="EC" id="2.5.1.39" evidence="1"/>
<dbReference type="EMBL" id="CP000926">
    <property type="protein sequence ID" value="ABZ01247.1"/>
    <property type="molecule type" value="Genomic_DNA"/>
</dbReference>
<dbReference type="RefSeq" id="WP_012274846.1">
    <property type="nucleotide sequence ID" value="NC_010322.1"/>
</dbReference>
<dbReference type="SMR" id="B0KQB7"/>
<dbReference type="KEGG" id="ppg:PputGB1_5365"/>
<dbReference type="eggNOG" id="COG0382">
    <property type="taxonomic scope" value="Bacteria"/>
</dbReference>
<dbReference type="HOGENOM" id="CLU_034879_1_0_6"/>
<dbReference type="UniPathway" id="UPA00232"/>
<dbReference type="Proteomes" id="UP000002157">
    <property type="component" value="Chromosome"/>
</dbReference>
<dbReference type="GO" id="GO:0005886">
    <property type="term" value="C:plasma membrane"/>
    <property type="evidence" value="ECO:0007669"/>
    <property type="project" value="UniProtKB-SubCell"/>
</dbReference>
<dbReference type="GO" id="GO:0008412">
    <property type="term" value="F:4-hydroxybenzoate polyprenyltransferase activity"/>
    <property type="evidence" value="ECO:0007669"/>
    <property type="project" value="UniProtKB-UniRule"/>
</dbReference>
<dbReference type="GO" id="GO:0006744">
    <property type="term" value="P:ubiquinone biosynthetic process"/>
    <property type="evidence" value="ECO:0007669"/>
    <property type="project" value="UniProtKB-UniRule"/>
</dbReference>
<dbReference type="CDD" id="cd13959">
    <property type="entry name" value="PT_UbiA_COQ2"/>
    <property type="match status" value="1"/>
</dbReference>
<dbReference type="FunFam" id="1.10.357.140:FF:000002">
    <property type="entry name" value="4-hydroxybenzoate octaprenyltransferase"/>
    <property type="match status" value="1"/>
</dbReference>
<dbReference type="FunFam" id="1.20.120.1780:FF:000001">
    <property type="entry name" value="4-hydroxybenzoate octaprenyltransferase"/>
    <property type="match status" value="1"/>
</dbReference>
<dbReference type="Gene3D" id="1.10.357.140">
    <property type="entry name" value="UbiA prenyltransferase"/>
    <property type="match status" value="1"/>
</dbReference>
<dbReference type="Gene3D" id="1.20.120.1780">
    <property type="entry name" value="UbiA prenyltransferase"/>
    <property type="match status" value="1"/>
</dbReference>
<dbReference type="HAMAP" id="MF_01635">
    <property type="entry name" value="UbiA"/>
    <property type="match status" value="1"/>
</dbReference>
<dbReference type="InterPro" id="IPR006370">
    <property type="entry name" value="HB_polyprenyltransferase-like"/>
</dbReference>
<dbReference type="InterPro" id="IPR039653">
    <property type="entry name" value="Prenyltransferase"/>
</dbReference>
<dbReference type="InterPro" id="IPR000537">
    <property type="entry name" value="UbiA_prenyltransferase"/>
</dbReference>
<dbReference type="InterPro" id="IPR044878">
    <property type="entry name" value="UbiA_sf"/>
</dbReference>
<dbReference type="NCBIfam" id="TIGR01474">
    <property type="entry name" value="ubiA_proteo"/>
    <property type="match status" value="1"/>
</dbReference>
<dbReference type="PANTHER" id="PTHR11048:SF28">
    <property type="entry name" value="4-HYDROXYBENZOATE POLYPRENYLTRANSFERASE, MITOCHONDRIAL"/>
    <property type="match status" value="1"/>
</dbReference>
<dbReference type="PANTHER" id="PTHR11048">
    <property type="entry name" value="PRENYLTRANSFERASES"/>
    <property type="match status" value="1"/>
</dbReference>
<dbReference type="Pfam" id="PF01040">
    <property type="entry name" value="UbiA"/>
    <property type="match status" value="1"/>
</dbReference>
<accession>B0KQB7</accession>
<protein>
    <recommendedName>
        <fullName evidence="1">4-hydroxybenzoate octaprenyltransferase</fullName>
        <ecNumber evidence="1">2.5.1.39</ecNumber>
    </recommendedName>
    <alternativeName>
        <fullName evidence="1">4-HB polyprenyltransferase</fullName>
    </alternativeName>
</protein>
<comment type="function">
    <text evidence="1">Catalyzes the prenylation of para-hydroxybenzoate (PHB) with an all-trans polyprenyl group. Mediates the second step in the final reaction sequence of ubiquinone-8 (UQ-8) biosynthesis, which is the condensation of the polyisoprenoid side chain with PHB, generating the first membrane-bound Q intermediate 3-octaprenyl-4-hydroxybenzoate.</text>
</comment>
<comment type="catalytic activity">
    <reaction evidence="1">
        <text>all-trans-octaprenyl diphosphate + 4-hydroxybenzoate = 4-hydroxy-3-(all-trans-octaprenyl)benzoate + diphosphate</text>
        <dbReference type="Rhea" id="RHEA:27782"/>
        <dbReference type="ChEBI" id="CHEBI:1617"/>
        <dbReference type="ChEBI" id="CHEBI:17879"/>
        <dbReference type="ChEBI" id="CHEBI:33019"/>
        <dbReference type="ChEBI" id="CHEBI:57711"/>
        <dbReference type="EC" id="2.5.1.39"/>
    </reaction>
</comment>
<comment type="cofactor">
    <cofactor evidence="1">
        <name>Mg(2+)</name>
        <dbReference type="ChEBI" id="CHEBI:18420"/>
    </cofactor>
</comment>
<comment type="pathway">
    <text evidence="1">Cofactor biosynthesis; ubiquinone biosynthesis.</text>
</comment>
<comment type="subcellular location">
    <subcellularLocation>
        <location evidence="1">Cell inner membrane</location>
        <topology evidence="1">Multi-pass membrane protein</topology>
    </subcellularLocation>
</comment>
<comment type="similarity">
    <text evidence="1">Belongs to the UbiA prenyltransferase family.</text>
</comment>
<feature type="chain" id="PRO_1000088177" description="4-hydroxybenzoate octaprenyltransferase">
    <location>
        <begin position="1"/>
        <end position="296"/>
    </location>
</feature>
<feature type="transmembrane region" description="Helical" evidence="1">
    <location>
        <begin position="28"/>
        <end position="48"/>
    </location>
</feature>
<feature type="transmembrane region" description="Helical" evidence="1">
    <location>
        <begin position="52"/>
        <end position="72"/>
    </location>
</feature>
<feature type="transmembrane region" description="Helical" evidence="1">
    <location>
        <begin position="102"/>
        <end position="122"/>
    </location>
</feature>
<feature type="transmembrane region" description="Helical" evidence="1">
    <location>
        <begin position="145"/>
        <end position="167"/>
    </location>
</feature>
<feature type="transmembrane region" description="Helical" evidence="1">
    <location>
        <begin position="174"/>
        <end position="196"/>
    </location>
</feature>
<feature type="transmembrane region" description="Helical" evidence="1">
    <location>
        <begin position="219"/>
        <end position="239"/>
    </location>
</feature>
<feature type="transmembrane region" description="Helical" evidence="1">
    <location>
        <begin position="241"/>
        <end position="261"/>
    </location>
</feature>
<feature type="transmembrane region" description="Helical" evidence="1">
    <location>
        <begin position="275"/>
        <end position="295"/>
    </location>
</feature>
<proteinExistence type="inferred from homology"/>
<keyword id="KW-0997">Cell inner membrane</keyword>
<keyword id="KW-1003">Cell membrane</keyword>
<keyword id="KW-0460">Magnesium</keyword>
<keyword id="KW-0472">Membrane</keyword>
<keyword id="KW-0808">Transferase</keyword>
<keyword id="KW-0812">Transmembrane</keyword>
<keyword id="KW-1133">Transmembrane helix</keyword>
<keyword id="KW-0831">Ubiquinone biosynthesis</keyword>
<reference key="1">
    <citation type="submission" date="2008-01" db="EMBL/GenBank/DDBJ databases">
        <title>Complete sequence of Pseudomonas putida GB-1.</title>
        <authorList>
            <consortium name="US DOE Joint Genome Institute"/>
            <person name="Copeland A."/>
            <person name="Lucas S."/>
            <person name="Lapidus A."/>
            <person name="Barry K."/>
            <person name="Glavina del Rio T."/>
            <person name="Dalin E."/>
            <person name="Tice H."/>
            <person name="Pitluck S."/>
            <person name="Bruce D."/>
            <person name="Goodwin L."/>
            <person name="Chertkov O."/>
            <person name="Brettin T."/>
            <person name="Detter J.C."/>
            <person name="Han C."/>
            <person name="Kuske C.R."/>
            <person name="Schmutz J."/>
            <person name="Larimer F."/>
            <person name="Land M."/>
            <person name="Hauser L."/>
            <person name="Kyrpides N."/>
            <person name="Kim E."/>
            <person name="McCarthy J.K."/>
            <person name="Richardson P."/>
        </authorList>
    </citation>
    <scope>NUCLEOTIDE SEQUENCE [LARGE SCALE GENOMIC DNA]</scope>
    <source>
        <strain>GB-1</strain>
    </source>
</reference>